<feature type="chain" id="PRO_0000051337" description="WD repeat and FYVE domain-containing protein 2">
    <location>
        <begin position="1"/>
        <end position="400"/>
    </location>
</feature>
<feature type="repeat" description="WD 1">
    <location>
        <begin position="22"/>
        <end position="61"/>
    </location>
</feature>
<feature type="repeat" description="WD 2">
    <location>
        <begin position="66"/>
        <end position="105"/>
    </location>
</feature>
<feature type="repeat" description="WD 3">
    <location>
        <begin position="112"/>
        <end position="150"/>
    </location>
</feature>
<feature type="repeat" description="WD 4">
    <location>
        <begin position="153"/>
        <end position="192"/>
    </location>
</feature>
<feature type="repeat" description="WD 5">
    <location>
        <begin position="197"/>
        <end position="236"/>
    </location>
</feature>
<feature type="repeat" description="WD 6">
    <location>
        <begin position="240"/>
        <end position="279"/>
    </location>
</feature>
<feature type="repeat" description="WD 7">
    <location>
        <begin position="364"/>
        <end position="399"/>
    </location>
</feature>
<feature type="zinc finger region" description="FYVE-type" evidence="2">
    <location>
        <begin position="281"/>
        <end position="352"/>
    </location>
</feature>
<feature type="binding site" evidence="2">
    <location>
        <position position="287"/>
    </location>
    <ligand>
        <name>Zn(2+)</name>
        <dbReference type="ChEBI" id="CHEBI:29105"/>
        <label>1</label>
    </ligand>
</feature>
<feature type="binding site" evidence="2">
    <location>
        <position position="290"/>
    </location>
    <ligand>
        <name>Zn(2+)</name>
        <dbReference type="ChEBI" id="CHEBI:29105"/>
        <label>1</label>
    </ligand>
</feature>
<feature type="binding site" evidence="2">
    <location>
        <position position="314"/>
    </location>
    <ligand>
        <name>Zn(2+)</name>
        <dbReference type="ChEBI" id="CHEBI:29105"/>
        <label>2</label>
    </ligand>
</feature>
<feature type="binding site" evidence="2">
    <location>
        <position position="317"/>
    </location>
    <ligand>
        <name>Zn(2+)</name>
        <dbReference type="ChEBI" id="CHEBI:29105"/>
        <label>2</label>
    </ligand>
</feature>
<feature type="binding site" evidence="2">
    <location>
        <position position="322"/>
    </location>
    <ligand>
        <name>Zn(2+)</name>
        <dbReference type="ChEBI" id="CHEBI:29105"/>
        <label>1</label>
    </ligand>
</feature>
<feature type="binding site" evidence="2">
    <location>
        <position position="325"/>
    </location>
    <ligand>
        <name>Zn(2+)</name>
        <dbReference type="ChEBI" id="CHEBI:29105"/>
        <label>1</label>
    </ligand>
</feature>
<feature type="binding site" evidence="2">
    <location>
        <position position="344"/>
    </location>
    <ligand>
        <name>Zn(2+)</name>
        <dbReference type="ChEBI" id="CHEBI:29105"/>
        <label>2</label>
    </ligand>
</feature>
<feature type="binding site" evidence="2">
    <location>
        <position position="347"/>
    </location>
    <ligand>
        <name>Zn(2+)</name>
        <dbReference type="ChEBI" id="CHEBI:29105"/>
        <label>2</label>
    </ligand>
</feature>
<feature type="sequence conflict" description="In Ref. 1; BAC39640." evidence="8" ref="1">
    <original>F</original>
    <variation>V</variation>
    <location>
        <position position="298"/>
    </location>
</feature>
<sequence>MAAEIQPQPLTRKPILLQRVEGSQEVVNMAVIVPKEEGVISVSEDRTVRVWLKRDSGQYWPSIYHAMPSPCSCMSFNPETRRLSIGLDNGTISEFILSEDYNKMTPVKNYQAHQSRVTMVLFVLELEWVLSTGQDKQFAWHCSESGQRLGGYRTSAVASGLQFDVETRHVFIGDHSGQVTILKLEQENCTLLTSFRGHTGGVTALCWDPVQRVLFSGSSDHSVIMWDIGGRKGTAIELQGHNDKVQALSYAQHTRQLISCGGDGGIVVWNMDVERQETPEWLDSDSCQKCDQPFFWNFKQMWDSKKIGLRQHHCRKCGKAVCGKCSSKRSSIPLMGFEFEVRVCDSCHEAITDEERAPTATFHDSKHNIVHVHFDATRGWLLTSGTDKVIKLWDMTPVVS</sequence>
<gene>
    <name type="primary">Wdfy2</name>
</gene>
<evidence type="ECO:0000250" key="1">
    <source>
        <dbReference type="UniProtKB" id="Q96P53"/>
    </source>
</evidence>
<evidence type="ECO:0000255" key="2">
    <source>
        <dbReference type="PROSITE-ProRule" id="PRU00091"/>
    </source>
</evidence>
<evidence type="ECO:0000269" key="3">
    <source>
    </source>
</evidence>
<evidence type="ECO:0000269" key="4">
    <source>
    </source>
</evidence>
<evidence type="ECO:0000269" key="5">
    <source>
    </source>
</evidence>
<evidence type="ECO:0000269" key="6">
    <source>
    </source>
</evidence>
<evidence type="ECO:0000303" key="7">
    <source>
    </source>
</evidence>
<evidence type="ECO:0000305" key="8"/>
<keyword id="KW-0963">Cytoplasm</keyword>
<keyword id="KW-0967">Endosome</keyword>
<keyword id="KW-0479">Metal-binding</keyword>
<keyword id="KW-1185">Reference proteome</keyword>
<keyword id="KW-0677">Repeat</keyword>
<keyword id="KW-0853">WD repeat</keyword>
<keyword id="KW-0862">Zinc</keyword>
<keyword id="KW-0863">Zinc-finger</keyword>
<proteinExistence type="evidence at protein level"/>
<reference key="1">
    <citation type="journal article" date="2005" name="Science">
        <title>The transcriptional landscape of the mammalian genome.</title>
        <authorList>
            <person name="Carninci P."/>
            <person name="Kasukawa T."/>
            <person name="Katayama S."/>
            <person name="Gough J."/>
            <person name="Frith M.C."/>
            <person name="Maeda N."/>
            <person name="Oyama R."/>
            <person name="Ravasi T."/>
            <person name="Lenhard B."/>
            <person name="Wells C."/>
            <person name="Kodzius R."/>
            <person name="Shimokawa K."/>
            <person name="Bajic V.B."/>
            <person name="Brenner S.E."/>
            <person name="Batalov S."/>
            <person name="Forrest A.R."/>
            <person name="Zavolan M."/>
            <person name="Davis M.J."/>
            <person name="Wilming L.G."/>
            <person name="Aidinis V."/>
            <person name="Allen J.E."/>
            <person name="Ambesi-Impiombato A."/>
            <person name="Apweiler R."/>
            <person name="Aturaliya R.N."/>
            <person name="Bailey T.L."/>
            <person name="Bansal M."/>
            <person name="Baxter L."/>
            <person name="Beisel K.W."/>
            <person name="Bersano T."/>
            <person name="Bono H."/>
            <person name="Chalk A.M."/>
            <person name="Chiu K.P."/>
            <person name="Choudhary V."/>
            <person name="Christoffels A."/>
            <person name="Clutterbuck D.R."/>
            <person name="Crowe M.L."/>
            <person name="Dalla E."/>
            <person name="Dalrymple B.P."/>
            <person name="de Bono B."/>
            <person name="Della Gatta G."/>
            <person name="di Bernardo D."/>
            <person name="Down T."/>
            <person name="Engstrom P."/>
            <person name="Fagiolini M."/>
            <person name="Faulkner G."/>
            <person name="Fletcher C.F."/>
            <person name="Fukushima T."/>
            <person name="Furuno M."/>
            <person name="Futaki S."/>
            <person name="Gariboldi M."/>
            <person name="Georgii-Hemming P."/>
            <person name="Gingeras T.R."/>
            <person name="Gojobori T."/>
            <person name="Green R.E."/>
            <person name="Gustincich S."/>
            <person name="Harbers M."/>
            <person name="Hayashi Y."/>
            <person name="Hensch T.K."/>
            <person name="Hirokawa N."/>
            <person name="Hill D."/>
            <person name="Huminiecki L."/>
            <person name="Iacono M."/>
            <person name="Ikeo K."/>
            <person name="Iwama A."/>
            <person name="Ishikawa T."/>
            <person name="Jakt M."/>
            <person name="Kanapin A."/>
            <person name="Katoh M."/>
            <person name="Kawasawa Y."/>
            <person name="Kelso J."/>
            <person name="Kitamura H."/>
            <person name="Kitano H."/>
            <person name="Kollias G."/>
            <person name="Krishnan S.P."/>
            <person name="Kruger A."/>
            <person name="Kummerfeld S.K."/>
            <person name="Kurochkin I.V."/>
            <person name="Lareau L.F."/>
            <person name="Lazarevic D."/>
            <person name="Lipovich L."/>
            <person name="Liu J."/>
            <person name="Liuni S."/>
            <person name="McWilliam S."/>
            <person name="Madan Babu M."/>
            <person name="Madera M."/>
            <person name="Marchionni L."/>
            <person name="Matsuda H."/>
            <person name="Matsuzawa S."/>
            <person name="Miki H."/>
            <person name="Mignone F."/>
            <person name="Miyake S."/>
            <person name="Morris K."/>
            <person name="Mottagui-Tabar S."/>
            <person name="Mulder N."/>
            <person name="Nakano N."/>
            <person name="Nakauchi H."/>
            <person name="Ng P."/>
            <person name="Nilsson R."/>
            <person name="Nishiguchi S."/>
            <person name="Nishikawa S."/>
            <person name="Nori F."/>
            <person name="Ohara O."/>
            <person name="Okazaki Y."/>
            <person name="Orlando V."/>
            <person name="Pang K.C."/>
            <person name="Pavan W.J."/>
            <person name="Pavesi G."/>
            <person name="Pesole G."/>
            <person name="Petrovsky N."/>
            <person name="Piazza S."/>
            <person name="Reed J."/>
            <person name="Reid J.F."/>
            <person name="Ring B.Z."/>
            <person name="Ringwald M."/>
            <person name="Rost B."/>
            <person name="Ruan Y."/>
            <person name="Salzberg S.L."/>
            <person name="Sandelin A."/>
            <person name="Schneider C."/>
            <person name="Schoenbach C."/>
            <person name="Sekiguchi K."/>
            <person name="Semple C.A."/>
            <person name="Seno S."/>
            <person name="Sessa L."/>
            <person name="Sheng Y."/>
            <person name="Shibata Y."/>
            <person name="Shimada H."/>
            <person name="Shimada K."/>
            <person name="Silva D."/>
            <person name="Sinclair B."/>
            <person name="Sperling S."/>
            <person name="Stupka E."/>
            <person name="Sugiura K."/>
            <person name="Sultana R."/>
            <person name="Takenaka Y."/>
            <person name="Taki K."/>
            <person name="Tammoja K."/>
            <person name="Tan S.L."/>
            <person name="Tang S."/>
            <person name="Taylor M.S."/>
            <person name="Tegner J."/>
            <person name="Teichmann S.A."/>
            <person name="Ueda H.R."/>
            <person name="van Nimwegen E."/>
            <person name="Verardo R."/>
            <person name="Wei C.L."/>
            <person name="Yagi K."/>
            <person name="Yamanishi H."/>
            <person name="Zabarovsky E."/>
            <person name="Zhu S."/>
            <person name="Zimmer A."/>
            <person name="Hide W."/>
            <person name="Bult C."/>
            <person name="Grimmond S.M."/>
            <person name="Teasdale R.D."/>
            <person name="Liu E.T."/>
            <person name="Brusic V."/>
            <person name="Quackenbush J."/>
            <person name="Wahlestedt C."/>
            <person name="Mattick J.S."/>
            <person name="Hume D.A."/>
            <person name="Kai C."/>
            <person name="Sasaki D."/>
            <person name="Tomaru Y."/>
            <person name="Fukuda S."/>
            <person name="Kanamori-Katayama M."/>
            <person name="Suzuki M."/>
            <person name="Aoki J."/>
            <person name="Arakawa T."/>
            <person name="Iida J."/>
            <person name="Imamura K."/>
            <person name="Itoh M."/>
            <person name="Kato T."/>
            <person name="Kawaji H."/>
            <person name="Kawagashira N."/>
            <person name="Kawashima T."/>
            <person name="Kojima M."/>
            <person name="Kondo S."/>
            <person name="Konno H."/>
            <person name="Nakano K."/>
            <person name="Ninomiya N."/>
            <person name="Nishio T."/>
            <person name="Okada M."/>
            <person name="Plessy C."/>
            <person name="Shibata K."/>
            <person name="Shiraki T."/>
            <person name="Suzuki S."/>
            <person name="Tagami M."/>
            <person name="Waki K."/>
            <person name="Watahiki A."/>
            <person name="Okamura-Oho Y."/>
            <person name="Suzuki H."/>
            <person name="Kawai J."/>
            <person name="Hayashizaki Y."/>
        </authorList>
    </citation>
    <scope>NUCLEOTIDE SEQUENCE [LARGE SCALE MRNA]</scope>
    <source>
        <strain>C57BL/6J</strain>
        <tissue>Bone marrow</tissue>
        <tissue>Head</tissue>
    </source>
</reference>
<reference key="2">
    <citation type="submission" date="2005-09" db="EMBL/GenBank/DDBJ databases">
        <authorList>
            <person name="Mural R.J."/>
            <person name="Adams M.D."/>
            <person name="Myers E.W."/>
            <person name="Smith H.O."/>
            <person name="Venter J.C."/>
        </authorList>
    </citation>
    <scope>NUCLEOTIDE SEQUENCE [LARGE SCALE GENOMIC DNA]</scope>
</reference>
<reference key="3">
    <citation type="journal article" date="2004" name="Genome Res.">
        <title>The status, quality, and expansion of the NIH full-length cDNA project: the Mammalian Gene Collection (MGC).</title>
        <authorList>
            <consortium name="The MGC Project Team"/>
        </authorList>
    </citation>
    <scope>NUCLEOTIDE SEQUENCE [LARGE SCALE MRNA]</scope>
</reference>
<reference key="4">
    <citation type="journal article" date="2006" name="Biochem. J.">
        <title>A WD-FYVE protein binds to the kinases Akt and PKCzeta/lambda.</title>
        <authorList>
            <person name="Fritzius T."/>
            <person name="Burkard G."/>
            <person name="Haas E."/>
            <person name="Heinrich J."/>
            <person name="Schweneker M."/>
            <person name="Bosse M."/>
            <person name="Zimmermann S."/>
            <person name="Frey A.D."/>
            <person name="Caelers A."/>
            <person name="Bachmann A.S."/>
            <person name="Moelling K."/>
        </authorList>
    </citation>
    <scope>TISSUE SPECIFICITY</scope>
    <scope>INTERACTION WITH AKT1; AKT2; PRKCZ AND PRKCI</scope>
</reference>
<reference key="5">
    <citation type="journal article" date="2007" name="FEBS J.">
        <title>WD-repeat-propeller-FYVE protein, ProF, binds VAMP2 and protein kinase Czeta.</title>
        <authorList>
            <person name="Fritzius T."/>
            <person name="Frey A.D."/>
            <person name="Schweneker M."/>
            <person name="Mayer D."/>
            <person name="Moelling K."/>
        </authorList>
    </citation>
    <scope>INTERACTION WITH VAMP2</scope>
    <scope>COMPLEX FORMATION WITH VAMP2 AND PRKCZ</scope>
</reference>
<reference key="6">
    <citation type="journal article" date="2008" name="EMBO J.">
        <title>Akt- and Foxo1-interacting WD-repeat-FYVE protein promotes adipogenesis.</title>
        <authorList>
            <person name="Fritzius T."/>
            <person name="Moelling K."/>
        </authorList>
    </citation>
    <scope>FUNCTION</scope>
    <scope>INTERACTION WITH FOXO1</scope>
    <scope>COMPLEX FORMATION WITH AKT1 AND FOXO1</scope>
    <scope>SUBCELLULAR LOCATION</scope>
    <scope>INDUCTION</scope>
</reference>
<reference key="7">
    <citation type="journal article" date="2010" name="J. Biol. Chem.">
        <title>Isoform-specific regulation of Akt signaling by the endosomal protein WDFY2.</title>
        <authorList>
            <person name="Walz H.A."/>
            <person name="Shi X."/>
            <person name="Chouinard M."/>
            <person name="Bue C.A."/>
            <person name="Navaroli D.M."/>
            <person name="Hayakawa A."/>
            <person name="Zhou Q.L."/>
            <person name="Nadler J."/>
            <person name="Leonard D.M."/>
            <person name="Corvera S."/>
        </authorList>
    </citation>
    <scope>FUNCTION</scope>
    <scope>INTERACTION WITH AKT1 AND AKT2</scope>
    <scope>SUBCELLULAR LOCATION</scope>
</reference>
<comment type="function">
    <text evidence="1 5 6">Acts in an adapter protein-like fashion to mediate the interaction between the kinase PRKCZ and its substrate VAMP2 and increases the PRKCZ-dependent phosphorylation of VAMP2 (By similarity). Positively regulates adipocyte differentiation, by facilitating the phosphorylation and thus inactivation of the anti-adipogenetic transcription factor FOXO1 by the kinase AKT1 (PubMed:18388859). Plays a role in endosomal control of AKT2 signaling; required for insulin-stimulated AKT2 phosphorylation and glucose uptake and insulin-stimulated phosphorylation of AKT2 substrates (PubMed:20189988). Participates in transferrin receptor endocytosis (By similarity).</text>
</comment>
<comment type="subunit">
    <text evidence="1 3 4 5 6">Homodimer (By similarity). Interacts (via WD repeats 1-3) with AKT1, AKT2, PRKCZ and PRKCI (PubMed:16792529, PubMed:20189988). Interacts with VAMP2 (PubMed:17313651). Forms a complex with VAMP2 and PRKCZ (PubMed:17313651). Interacts with FOXO1 (PubMed:18388859). Forms a complex with AKT1 and FOXO1 (PubMed:18388859).</text>
</comment>
<comment type="subcellular location">
    <subcellularLocation>
        <location evidence="1">Endosome</location>
    </subcellularLocation>
    <subcellularLocation>
        <location evidence="6">Early endosome</location>
    </subcellularLocation>
    <subcellularLocation>
        <location evidence="5">Cytoplasm</location>
    </subcellularLocation>
    <text evidence="1 6">Localizes to intracellular vesicles. Colocalizes with VAMP2 and PRKCZ in intracellular vesicles (By similarity). Colocalizes with AKT2 in early endosomes (PubMed:20189988).</text>
</comment>
<comment type="tissue specificity">
    <text evidence="3">Highly expressed in the brain (at protein level).</text>
</comment>
<comment type="induction">
    <text evidence="5">Transiently up-regulated during adipogenesis (at protein level).</text>
</comment>
<comment type="domain">
    <text evidence="1">The FYVE-type zinc finger is essential for its vesicular localization.</text>
</comment>
<organism>
    <name type="scientific">Mus musculus</name>
    <name type="common">Mouse</name>
    <dbReference type="NCBI Taxonomy" id="10090"/>
    <lineage>
        <taxon>Eukaryota</taxon>
        <taxon>Metazoa</taxon>
        <taxon>Chordata</taxon>
        <taxon>Craniata</taxon>
        <taxon>Vertebrata</taxon>
        <taxon>Euteleostomi</taxon>
        <taxon>Mammalia</taxon>
        <taxon>Eutheria</taxon>
        <taxon>Euarchontoglires</taxon>
        <taxon>Glires</taxon>
        <taxon>Rodentia</taxon>
        <taxon>Myomorpha</taxon>
        <taxon>Muroidea</taxon>
        <taxon>Muridae</taxon>
        <taxon>Murinae</taxon>
        <taxon>Mus</taxon>
        <taxon>Mus</taxon>
    </lineage>
</organism>
<name>WDFY2_MOUSE</name>
<dbReference type="EMBL" id="AK086275">
    <property type="protein sequence ID" value="BAC39640.1"/>
    <property type="molecule type" value="mRNA"/>
</dbReference>
<dbReference type="EMBL" id="AK131958">
    <property type="protein sequence ID" value="BAE20902.1"/>
    <property type="molecule type" value="mRNA"/>
</dbReference>
<dbReference type="EMBL" id="AK151817">
    <property type="protein sequence ID" value="BAE30714.1"/>
    <property type="molecule type" value="mRNA"/>
</dbReference>
<dbReference type="EMBL" id="CH466535">
    <property type="protein sequence ID" value="EDL36078.1"/>
    <property type="molecule type" value="Genomic_DNA"/>
</dbReference>
<dbReference type="EMBL" id="BC116632">
    <property type="protein sequence ID" value="AAI16633.1"/>
    <property type="molecule type" value="mRNA"/>
</dbReference>
<dbReference type="CCDS" id="CCDS27192.1"/>
<dbReference type="RefSeq" id="NP_780755.2">
    <property type="nucleotide sequence ID" value="NM_175546.4"/>
</dbReference>
<dbReference type="SMR" id="Q8BUB4"/>
<dbReference type="BioGRID" id="234549">
    <property type="interactions" value="1"/>
</dbReference>
<dbReference type="FunCoup" id="Q8BUB4">
    <property type="interactions" value="3490"/>
</dbReference>
<dbReference type="IntAct" id="Q8BUB4">
    <property type="interactions" value="2"/>
</dbReference>
<dbReference type="MINT" id="Q8BUB4"/>
<dbReference type="STRING" id="10090.ENSMUSP00000014691"/>
<dbReference type="PhosphoSitePlus" id="Q8BUB4"/>
<dbReference type="PaxDb" id="10090-ENSMUSP00000014691"/>
<dbReference type="PeptideAtlas" id="Q8BUB4"/>
<dbReference type="ProteomicsDB" id="297934"/>
<dbReference type="Pumba" id="Q8BUB4"/>
<dbReference type="Antibodypedia" id="24090">
    <property type="antibodies" value="49 antibodies from 14 providers"/>
</dbReference>
<dbReference type="Ensembl" id="ENSMUST00000014691.10">
    <property type="protein sequence ID" value="ENSMUSP00000014691.9"/>
    <property type="gene ID" value="ENSMUSG00000014547.11"/>
</dbReference>
<dbReference type="GeneID" id="268752"/>
<dbReference type="KEGG" id="mmu:268752"/>
<dbReference type="UCSC" id="uc007ugy.2">
    <property type="organism name" value="mouse"/>
</dbReference>
<dbReference type="AGR" id="MGI:2442811"/>
<dbReference type="CTD" id="115825"/>
<dbReference type="MGI" id="MGI:2442811">
    <property type="gene designation" value="Wdfy2"/>
</dbReference>
<dbReference type="VEuPathDB" id="HostDB:ENSMUSG00000014547"/>
<dbReference type="eggNOG" id="KOG1409">
    <property type="taxonomic scope" value="Eukaryota"/>
</dbReference>
<dbReference type="GeneTree" id="ENSGT00940000158527"/>
<dbReference type="HOGENOM" id="CLU_046919_0_0_1"/>
<dbReference type="InParanoid" id="Q8BUB4"/>
<dbReference type="OMA" id="DYNQITH"/>
<dbReference type="OrthoDB" id="63070at2759"/>
<dbReference type="PhylomeDB" id="Q8BUB4"/>
<dbReference type="TreeFam" id="TF314470"/>
<dbReference type="BioGRID-ORCS" id="268752">
    <property type="hits" value="0 hits in 76 CRISPR screens"/>
</dbReference>
<dbReference type="ChiTaRS" id="Wdfy2">
    <property type="organism name" value="mouse"/>
</dbReference>
<dbReference type="PRO" id="PR:Q8BUB4"/>
<dbReference type="Proteomes" id="UP000000589">
    <property type="component" value="Chromosome 14"/>
</dbReference>
<dbReference type="RNAct" id="Q8BUB4">
    <property type="molecule type" value="protein"/>
</dbReference>
<dbReference type="Bgee" id="ENSMUSG00000014547">
    <property type="expression patterns" value="Expressed in lacrimal gland and 251 other cell types or tissues"/>
</dbReference>
<dbReference type="GO" id="GO:0005737">
    <property type="term" value="C:cytoplasm"/>
    <property type="evidence" value="ECO:0000314"/>
    <property type="project" value="UniProtKB"/>
</dbReference>
<dbReference type="GO" id="GO:0005769">
    <property type="term" value="C:early endosome"/>
    <property type="evidence" value="ECO:0000250"/>
    <property type="project" value="UniProtKB"/>
</dbReference>
<dbReference type="GO" id="GO:0031982">
    <property type="term" value="C:vesicle"/>
    <property type="evidence" value="ECO:0000250"/>
    <property type="project" value="UniProtKB"/>
</dbReference>
<dbReference type="GO" id="GO:0008270">
    <property type="term" value="F:zinc ion binding"/>
    <property type="evidence" value="ECO:0007669"/>
    <property type="project" value="UniProtKB-KW"/>
</dbReference>
<dbReference type="GO" id="GO:0045600">
    <property type="term" value="P:positive regulation of fat cell differentiation"/>
    <property type="evidence" value="ECO:0000315"/>
    <property type="project" value="UniProtKB"/>
</dbReference>
<dbReference type="GO" id="GO:0001934">
    <property type="term" value="P:positive regulation of protein phosphorylation"/>
    <property type="evidence" value="ECO:0000250"/>
    <property type="project" value="UniProtKB"/>
</dbReference>
<dbReference type="CDD" id="cd15718">
    <property type="entry name" value="FYVE_WDFY1_like"/>
    <property type="match status" value="1"/>
</dbReference>
<dbReference type="FunFam" id="2.130.10.10:FF:000285">
    <property type="entry name" value="WD repeat and FYVE domain-containing protein 1"/>
    <property type="match status" value="1"/>
</dbReference>
<dbReference type="FunFam" id="3.30.40.10:FF:000105">
    <property type="entry name" value="WD repeat and FYVE domain-containing protein 2"/>
    <property type="match status" value="1"/>
</dbReference>
<dbReference type="Gene3D" id="2.130.10.10">
    <property type="entry name" value="YVTN repeat-like/Quinoprotein amine dehydrogenase"/>
    <property type="match status" value="2"/>
</dbReference>
<dbReference type="Gene3D" id="3.30.40.10">
    <property type="entry name" value="Zinc/RING finger domain, C3HC4 (zinc finger)"/>
    <property type="match status" value="1"/>
</dbReference>
<dbReference type="InterPro" id="IPR020472">
    <property type="entry name" value="G-protein_beta_WD-40_rep"/>
</dbReference>
<dbReference type="InterPro" id="IPR015943">
    <property type="entry name" value="WD40/YVTN_repeat-like_dom_sf"/>
</dbReference>
<dbReference type="InterPro" id="IPR019775">
    <property type="entry name" value="WD40_repeat_CS"/>
</dbReference>
<dbReference type="InterPro" id="IPR036322">
    <property type="entry name" value="WD40_repeat_dom_sf"/>
</dbReference>
<dbReference type="InterPro" id="IPR001680">
    <property type="entry name" value="WD40_rpt"/>
</dbReference>
<dbReference type="InterPro" id="IPR042234">
    <property type="entry name" value="WDFY1/WDFY2"/>
</dbReference>
<dbReference type="InterPro" id="IPR000306">
    <property type="entry name" value="Znf_FYVE"/>
</dbReference>
<dbReference type="InterPro" id="IPR017455">
    <property type="entry name" value="Znf_FYVE-rel"/>
</dbReference>
<dbReference type="InterPro" id="IPR013083">
    <property type="entry name" value="Znf_RING/FYVE/PHD"/>
</dbReference>
<dbReference type="PANTHER" id="PTHR46189">
    <property type="entry name" value="LD41958P"/>
    <property type="match status" value="1"/>
</dbReference>
<dbReference type="PANTHER" id="PTHR46189:SF3">
    <property type="entry name" value="WD REPEAT AND FYVE DOMAIN-CONTAINING PROTEIN 2"/>
    <property type="match status" value="1"/>
</dbReference>
<dbReference type="Pfam" id="PF01363">
    <property type="entry name" value="FYVE"/>
    <property type="match status" value="1"/>
</dbReference>
<dbReference type="Pfam" id="PF00400">
    <property type="entry name" value="WD40"/>
    <property type="match status" value="3"/>
</dbReference>
<dbReference type="PRINTS" id="PR00320">
    <property type="entry name" value="GPROTEINBRPT"/>
</dbReference>
<dbReference type="SMART" id="SM00064">
    <property type="entry name" value="FYVE"/>
    <property type="match status" value="1"/>
</dbReference>
<dbReference type="SMART" id="SM00320">
    <property type="entry name" value="WD40"/>
    <property type="match status" value="5"/>
</dbReference>
<dbReference type="SUPFAM" id="SSF50978">
    <property type="entry name" value="WD40 repeat-like"/>
    <property type="match status" value="1"/>
</dbReference>
<dbReference type="PROSITE" id="PS00678">
    <property type="entry name" value="WD_REPEATS_1"/>
    <property type="match status" value="3"/>
</dbReference>
<dbReference type="PROSITE" id="PS50082">
    <property type="entry name" value="WD_REPEATS_2"/>
    <property type="match status" value="4"/>
</dbReference>
<dbReference type="PROSITE" id="PS50294">
    <property type="entry name" value="WD_REPEATS_REGION"/>
    <property type="match status" value="2"/>
</dbReference>
<dbReference type="PROSITE" id="PS50178">
    <property type="entry name" value="ZF_FYVE"/>
    <property type="match status" value="1"/>
</dbReference>
<accession>Q8BUB4</accession>
<accession>Q3U9F3</accession>
<protein>
    <recommendedName>
        <fullName>WD repeat and FYVE domain-containing protein 2</fullName>
    </recommendedName>
    <alternativeName>
        <fullName evidence="7">Propeller-FYVE protein</fullName>
        <shortName>Prof</shortName>
    </alternativeName>
    <alternativeName>
        <fullName>WD40- and FYVE domain-containing protein 2</fullName>
    </alternativeName>
</protein>